<sequence length="191" mass="21558">MEYFDMRKMSVNLWRNAAGETREICTFPPAKRDFYWRASIASIAANGEFSLFPGMERIVTLLEGGEMFLESADHFNHTLKPLQPFAFAADQVVKAKLTAGQMSMDFNIMTRLDVCKAKVRIAERTFTTFGSRGGVVFVINGAWQLGDKLLTTDQGACWFDGRHTLRLLQPQGKLLFSEINWLAGHSPDQVQ</sequence>
<organism>
    <name type="scientific">Escherichia coli O157:H7</name>
    <dbReference type="NCBI Taxonomy" id="83334"/>
    <lineage>
        <taxon>Bacteria</taxon>
        <taxon>Pseudomonadati</taxon>
        <taxon>Pseudomonadota</taxon>
        <taxon>Gammaproteobacteria</taxon>
        <taxon>Enterobacterales</taxon>
        <taxon>Enterobacteriaceae</taxon>
        <taxon>Escherichia</taxon>
    </lineage>
</organism>
<gene>
    <name evidence="1" type="primary">ves</name>
    <name type="ordered locus">Z2774</name>
    <name type="ordered locus">ECs2448</name>
</gene>
<dbReference type="EMBL" id="AE005174">
    <property type="protein sequence ID" value="AAG56728.1"/>
    <property type="status" value="ALT_INIT"/>
    <property type="molecule type" value="Genomic_DNA"/>
</dbReference>
<dbReference type="EMBL" id="BA000007">
    <property type="protein sequence ID" value="BAB35871.1"/>
    <property type="status" value="ALT_INIT"/>
    <property type="molecule type" value="Genomic_DNA"/>
</dbReference>
<dbReference type="PIR" id="D85783">
    <property type="entry name" value="D85783"/>
</dbReference>
<dbReference type="PIR" id="H90934">
    <property type="entry name" value="H90934"/>
</dbReference>
<dbReference type="RefSeq" id="NP_310475.2">
    <property type="nucleotide sequence ID" value="NC_002695.1"/>
</dbReference>
<dbReference type="RefSeq" id="WP_001302036.1">
    <property type="nucleotide sequence ID" value="NZ_VOAI01000007.1"/>
</dbReference>
<dbReference type="SMR" id="Q8XDZ6"/>
<dbReference type="STRING" id="155864.Z2774"/>
<dbReference type="GeneID" id="75203048"/>
<dbReference type="GeneID" id="917112"/>
<dbReference type="KEGG" id="ece:Z2774"/>
<dbReference type="KEGG" id="ecs:ECs_2448"/>
<dbReference type="PATRIC" id="fig|386585.9.peg.2562"/>
<dbReference type="eggNOG" id="COG3758">
    <property type="taxonomic scope" value="Bacteria"/>
</dbReference>
<dbReference type="HOGENOM" id="CLU_090931_5_0_6"/>
<dbReference type="OMA" id="ETREICC"/>
<dbReference type="Proteomes" id="UP000000558">
    <property type="component" value="Chromosome"/>
</dbReference>
<dbReference type="Proteomes" id="UP000002519">
    <property type="component" value="Chromosome"/>
</dbReference>
<dbReference type="CDD" id="cd20293">
    <property type="entry name" value="cupin_HutD_N"/>
    <property type="match status" value="1"/>
</dbReference>
<dbReference type="Gene3D" id="2.60.120.10">
    <property type="entry name" value="Jelly Rolls"/>
    <property type="match status" value="1"/>
</dbReference>
<dbReference type="HAMAP" id="MF_01591">
    <property type="entry name" value="Ves"/>
    <property type="match status" value="1"/>
</dbReference>
<dbReference type="InterPro" id="IPR014710">
    <property type="entry name" value="RmlC-like_jellyroll"/>
</dbReference>
<dbReference type="InterPro" id="IPR011051">
    <property type="entry name" value="RmlC_Cupin_sf"/>
</dbReference>
<dbReference type="InterPro" id="IPR010282">
    <property type="entry name" value="Uncharacterised_HutD/Ves"/>
</dbReference>
<dbReference type="InterPro" id="IPR023482">
    <property type="entry name" value="Uncharacterised_Ves"/>
</dbReference>
<dbReference type="NCBIfam" id="NF008488">
    <property type="entry name" value="PRK11396.1"/>
    <property type="match status" value="1"/>
</dbReference>
<dbReference type="PANTHER" id="PTHR37943">
    <property type="entry name" value="PROTEIN VES"/>
    <property type="match status" value="1"/>
</dbReference>
<dbReference type="PANTHER" id="PTHR37943:SF1">
    <property type="entry name" value="PROTEIN VES"/>
    <property type="match status" value="1"/>
</dbReference>
<dbReference type="Pfam" id="PF05962">
    <property type="entry name" value="HutD"/>
    <property type="match status" value="1"/>
</dbReference>
<dbReference type="SUPFAM" id="SSF51182">
    <property type="entry name" value="RmlC-like cupins"/>
    <property type="match status" value="1"/>
</dbReference>
<name>VES_ECO57</name>
<comment type="similarity">
    <text evidence="1">Belongs to the Ves family.</text>
</comment>
<comment type="sequence caution" evidence="2">
    <conflict type="erroneous initiation">
        <sequence resource="EMBL-CDS" id="AAG56728"/>
    </conflict>
</comment>
<comment type="sequence caution" evidence="2">
    <conflict type="erroneous initiation">
        <sequence resource="EMBL-CDS" id="BAB35871"/>
    </conflict>
</comment>
<accession>Q8XDZ6</accession>
<accession>Q7ADF0</accession>
<proteinExistence type="inferred from homology"/>
<evidence type="ECO:0000255" key="1">
    <source>
        <dbReference type="HAMAP-Rule" id="MF_01591"/>
    </source>
</evidence>
<evidence type="ECO:0000305" key="2"/>
<feature type="chain" id="PRO_0000315004" description="Protein Ves">
    <location>
        <begin position="1"/>
        <end position="191"/>
    </location>
</feature>
<reference key="1">
    <citation type="journal article" date="2001" name="Nature">
        <title>Genome sequence of enterohaemorrhagic Escherichia coli O157:H7.</title>
        <authorList>
            <person name="Perna N.T."/>
            <person name="Plunkett G. III"/>
            <person name="Burland V."/>
            <person name="Mau B."/>
            <person name="Glasner J.D."/>
            <person name="Rose D.J."/>
            <person name="Mayhew G.F."/>
            <person name="Evans P.S."/>
            <person name="Gregor J."/>
            <person name="Kirkpatrick H.A."/>
            <person name="Posfai G."/>
            <person name="Hackett J."/>
            <person name="Klink S."/>
            <person name="Boutin A."/>
            <person name="Shao Y."/>
            <person name="Miller L."/>
            <person name="Grotbeck E.J."/>
            <person name="Davis N.W."/>
            <person name="Lim A."/>
            <person name="Dimalanta E.T."/>
            <person name="Potamousis K."/>
            <person name="Apodaca J."/>
            <person name="Anantharaman T.S."/>
            <person name="Lin J."/>
            <person name="Yen G."/>
            <person name="Schwartz D.C."/>
            <person name="Welch R.A."/>
            <person name="Blattner F.R."/>
        </authorList>
    </citation>
    <scope>NUCLEOTIDE SEQUENCE [LARGE SCALE GENOMIC DNA]</scope>
    <source>
        <strain>O157:H7 / EDL933 / ATCC 700927 / EHEC</strain>
    </source>
</reference>
<reference key="2">
    <citation type="journal article" date="2001" name="DNA Res.">
        <title>Complete genome sequence of enterohemorrhagic Escherichia coli O157:H7 and genomic comparison with a laboratory strain K-12.</title>
        <authorList>
            <person name="Hayashi T."/>
            <person name="Makino K."/>
            <person name="Ohnishi M."/>
            <person name="Kurokawa K."/>
            <person name="Ishii K."/>
            <person name="Yokoyama K."/>
            <person name="Han C.-G."/>
            <person name="Ohtsubo E."/>
            <person name="Nakayama K."/>
            <person name="Murata T."/>
            <person name="Tanaka M."/>
            <person name="Tobe T."/>
            <person name="Iida T."/>
            <person name="Takami H."/>
            <person name="Honda T."/>
            <person name="Sasakawa C."/>
            <person name="Ogasawara N."/>
            <person name="Yasunaga T."/>
            <person name="Kuhara S."/>
            <person name="Shiba T."/>
            <person name="Hattori M."/>
            <person name="Shinagawa H."/>
        </authorList>
    </citation>
    <scope>NUCLEOTIDE SEQUENCE [LARGE SCALE GENOMIC DNA]</scope>
    <source>
        <strain>O157:H7 / Sakai / RIMD 0509952 / EHEC</strain>
    </source>
</reference>
<keyword id="KW-1185">Reference proteome</keyword>
<protein>
    <recommendedName>
        <fullName evidence="1">Protein Ves</fullName>
    </recommendedName>
</protein>